<gene>
    <name evidence="2" type="primary">rpsL</name>
    <name type="ordered locus">A1S_0866</name>
</gene>
<name>RS12_ACIBT</name>
<proteinExistence type="inferred from homology"/>
<protein>
    <recommendedName>
        <fullName evidence="2">Small ribosomal subunit protein uS12</fullName>
    </recommendedName>
    <alternativeName>
        <fullName evidence="3">30S ribosomal protein S12</fullName>
    </alternativeName>
</protein>
<reference key="1">
    <citation type="journal article" date="2007" name="Genes Dev.">
        <title>New insights into Acinetobacter baumannii pathogenesis revealed by high-density pyrosequencing and transposon mutagenesis.</title>
        <authorList>
            <person name="Smith M.G."/>
            <person name="Gianoulis T.A."/>
            <person name="Pukatzki S."/>
            <person name="Mekalanos J.J."/>
            <person name="Ornston L.N."/>
            <person name="Gerstein M."/>
            <person name="Snyder M."/>
        </authorList>
    </citation>
    <scope>NUCLEOTIDE SEQUENCE [LARGE SCALE GENOMIC DNA]</scope>
    <source>
        <strain>ATCC 17978 / DSM 105126 / CIP 53.77 / LMG 1025 / NCDC KC755 / 5377</strain>
    </source>
</reference>
<comment type="function">
    <text evidence="2">With S4 and S5 plays an important role in translational accuracy.</text>
</comment>
<comment type="function">
    <text evidence="2">Interacts with and stabilizes bases of the 16S rRNA that are involved in tRNA selection in the A site and with the mRNA backbone. Located at the interface of the 30S and 50S subunits, it traverses the body of the 30S subunit contacting proteins on the other side and probably holding the rRNA structure together. The combined cluster of proteins S8, S12 and S17 appears to hold together the shoulder and platform of the 30S subunit.</text>
</comment>
<comment type="subunit">
    <text evidence="2">Part of the 30S ribosomal subunit. Contacts proteins S8 and S17. May interact with IF1 in the 30S initiation complex.</text>
</comment>
<comment type="similarity">
    <text evidence="2">Belongs to the universal ribosomal protein uS12 family.</text>
</comment>
<accession>A3M304</accession>
<sequence>MATTNQLIRKGRTTLVEKSKVPALKACPQRRGVCTRVYTTTPKKPNSAMRKVCRVRLTSGFEVSSYIGGEGHNLQEHSVVLIRGGRVKDLPGVRYHTVRGSLDCAGVKDRNQSRSKYGAKRPKK</sequence>
<keyword id="KW-0488">Methylation</keyword>
<keyword id="KW-0687">Ribonucleoprotein</keyword>
<keyword id="KW-0689">Ribosomal protein</keyword>
<keyword id="KW-0694">RNA-binding</keyword>
<keyword id="KW-0699">rRNA-binding</keyword>
<keyword id="KW-0820">tRNA-binding</keyword>
<evidence type="ECO:0000250" key="1"/>
<evidence type="ECO:0000255" key="2">
    <source>
        <dbReference type="HAMAP-Rule" id="MF_00403"/>
    </source>
</evidence>
<evidence type="ECO:0000305" key="3"/>
<dbReference type="EMBL" id="CP000521">
    <property type="protein sequence ID" value="ABO11298.2"/>
    <property type="molecule type" value="Genomic_DNA"/>
</dbReference>
<dbReference type="RefSeq" id="WP_000246374.1">
    <property type="nucleotide sequence ID" value="NZ_CP053098.1"/>
</dbReference>
<dbReference type="SMR" id="A3M304"/>
<dbReference type="GeneID" id="92892795"/>
<dbReference type="KEGG" id="acb:A1S_0866"/>
<dbReference type="HOGENOM" id="CLU_104295_1_2_6"/>
<dbReference type="GO" id="GO:0015935">
    <property type="term" value="C:small ribosomal subunit"/>
    <property type="evidence" value="ECO:0007669"/>
    <property type="project" value="InterPro"/>
</dbReference>
<dbReference type="GO" id="GO:0019843">
    <property type="term" value="F:rRNA binding"/>
    <property type="evidence" value="ECO:0007669"/>
    <property type="project" value="UniProtKB-UniRule"/>
</dbReference>
<dbReference type="GO" id="GO:0003735">
    <property type="term" value="F:structural constituent of ribosome"/>
    <property type="evidence" value="ECO:0007669"/>
    <property type="project" value="InterPro"/>
</dbReference>
<dbReference type="GO" id="GO:0000049">
    <property type="term" value="F:tRNA binding"/>
    <property type="evidence" value="ECO:0007669"/>
    <property type="project" value="UniProtKB-UniRule"/>
</dbReference>
<dbReference type="GO" id="GO:0006412">
    <property type="term" value="P:translation"/>
    <property type="evidence" value="ECO:0007669"/>
    <property type="project" value="UniProtKB-UniRule"/>
</dbReference>
<dbReference type="CDD" id="cd03368">
    <property type="entry name" value="Ribosomal_S12"/>
    <property type="match status" value="1"/>
</dbReference>
<dbReference type="FunFam" id="2.40.50.140:FF:000001">
    <property type="entry name" value="30S ribosomal protein S12"/>
    <property type="match status" value="1"/>
</dbReference>
<dbReference type="Gene3D" id="2.40.50.140">
    <property type="entry name" value="Nucleic acid-binding proteins"/>
    <property type="match status" value="1"/>
</dbReference>
<dbReference type="HAMAP" id="MF_00403_B">
    <property type="entry name" value="Ribosomal_uS12_B"/>
    <property type="match status" value="1"/>
</dbReference>
<dbReference type="InterPro" id="IPR012340">
    <property type="entry name" value="NA-bd_OB-fold"/>
</dbReference>
<dbReference type="InterPro" id="IPR006032">
    <property type="entry name" value="Ribosomal_uS12"/>
</dbReference>
<dbReference type="InterPro" id="IPR005679">
    <property type="entry name" value="Ribosomal_uS12_bac"/>
</dbReference>
<dbReference type="NCBIfam" id="TIGR00981">
    <property type="entry name" value="rpsL_bact"/>
    <property type="match status" value="1"/>
</dbReference>
<dbReference type="PANTHER" id="PTHR11652">
    <property type="entry name" value="30S RIBOSOMAL PROTEIN S12 FAMILY MEMBER"/>
    <property type="match status" value="1"/>
</dbReference>
<dbReference type="Pfam" id="PF00164">
    <property type="entry name" value="Ribosom_S12_S23"/>
    <property type="match status" value="1"/>
</dbReference>
<dbReference type="PIRSF" id="PIRSF002133">
    <property type="entry name" value="Ribosomal_S12/S23"/>
    <property type="match status" value="1"/>
</dbReference>
<dbReference type="PRINTS" id="PR01034">
    <property type="entry name" value="RIBOSOMALS12"/>
</dbReference>
<dbReference type="SUPFAM" id="SSF50249">
    <property type="entry name" value="Nucleic acid-binding proteins"/>
    <property type="match status" value="1"/>
</dbReference>
<dbReference type="PROSITE" id="PS00055">
    <property type="entry name" value="RIBOSOMAL_S12"/>
    <property type="match status" value="1"/>
</dbReference>
<organism>
    <name type="scientific">Acinetobacter baumannii (strain ATCC 17978 / DSM 105126 / CIP 53.77 / LMG 1025 / NCDC KC755 / 5377)</name>
    <dbReference type="NCBI Taxonomy" id="400667"/>
    <lineage>
        <taxon>Bacteria</taxon>
        <taxon>Pseudomonadati</taxon>
        <taxon>Pseudomonadota</taxon>
        <taxon>Gammaproteobacteria</taxon>
        <taxon>Moraxellales</taxon>
        <taxon>Moraxellaceae</taxon>
        <taxon>Acinetobacter</taxon>
        <taxon>Acinetobacter calcoaceticus/baumannii complex</taxon>
    </lineage>
</organism>
<feature type="chain" id="PRO_0000295945" description="Small ribosomal subunit protein uS12">
    <location>
        <begin position="1"/>
        <end position="124"/>
    </location>
</feature>
<feature type="modified residue" description="3-methylthioaspartic acid" evidence="1">
    <location>
        <position position="89"/>
    </location>
</feature>